<proteinExistence type="evidence at protein level"/>
<sequence length="99" mass="10726">MATFKVTLINEAEGTSNTIDVPDDEYILDAAEEQGYDLPFSCRAGACSTCAGKLVSGTVDQSDQSFLDDDQIEAGYVLTCVAYPTSDVTIQTHKEEDLY</sequence>
<comment type="function">
    <text>Ferredoxins are iron-sulfur proteins that transfer electrons in a wide variety of metabolic reactions.</text>
</comment>
<comment type="cofactor">
    <cofactor>
        <name>[2Fe-2S] cluster</name>
        <dbReference type="ChEBI" id="CHEBI:190135"/>
    </cofactor>
    <text>Binds 1 [2Fe-2S] cluster.</text>
</comment>
<comment type="subunit">
    <text evidence="1">Forms a complex with heterodimeric ferredoxin-thioredoxin reductase (FTR) and thioredoxin.</text>
</comment>
<comment type="similarity">
    <text evidence="4">Belongs to the 2Fe2S plant-type ferredoxin family.</text>
</comment>
<keyword id="KW-0001">2Fe-2S</keyword>
<keyword id="KW-0903">Direct protein sequencing</keyword>
<keyword id="KW-0249">Electron transport</keyword>
<keyword id="KW-0408">Iron</keyword>
<keyword id="KW-0411">Iron-sulfur</keyword>
<keyword id="KW-0479">Metal-binding</keyword>
<keyword id="KW-0813">Transport</keyword>
<organism>
    <name type="scientific">Trichormus variabilis (strain ATCC 29413 / PCC 7937)</name>
    <name type="common">Anabaena variabilis</name>
    <dbReference type="NCBI Taxonomy" id="240292"/>
    <lineage>
        <taxon>Bacteria</taxon>
        <taxon>Bacillati</taxon>
        <taxon>Cyanobacteriota</taxon>
        <taxon>Cyanophyceae</taxon>
        <taxon>Nostocales</taxon>
        <taxon>Nostocaceae</taxon>
        <taxon>Trichormus</taxon>
    </lineage>
</organism>
<protein>
    <recommendedName>
        <fullName>Ferredoxin-1</fullName>
    </recommendedName>
    <alternativeName>
        <fullName>Ferredoxin I</fullName>
    </alternativeName>
</protein>
<dbReference type="EMBL" id="X06210">
    <property type="protein sequence ID" value="CAA29563.1"/>
    <property type="molecule type" value="Genomic_DNA"/>
</dbReference>
<dbReference type="EMBL" id="X14343">
    <property type="protein sequence ID" value="CAA32528.1"/>
    <property type="molecule type" value="Genomic_DNA"/>
</dbReference>
<dbReference type="EMBL" id="CP000117">
    <property type="protein sequence ID" value="ABA20380.1"/>
    <property type="molecule type" value="Genomic_DNA"/>
</dbReference>
<dbReference type="PIR" id="A25761">
    <property type="entry name" value="FEAI"/>
</dbReference>
<dbReference type="SMR" id="P00254"/>
<dbReference type="STRING" id="240292.Ava_0756"/>
<dbReference type="KEGG" id="ava:Ava_0756"/>
<dbReference type="eggNOG" id="COG0633">
    <property type="taxonomic scope" value="Bacteria"/>
</dbReference>
<dbReference type="HOGENOM" id="CLU_082632_7_3_3"/>
<dbReference type="Proteomes" id="UP000002533">
    <property type="component" value="Chromosome"/>
</dbReference>
<dbReference type="GO" id="GO:0051537">
    <property type="term" value="F:2 iron, 2 sulfur cluster binding"/>
    <property type="evidence" value="ECO:0007669"/>
    <property type="project" value="UniProtKB-KW"/>
</dbReference>
<dbReference type="GO" id="GO:0009055">
    <property type="term" value="F:electron transfer activity"/>
    <property type="evidence" value="ECO:0007669"/>
    <property type="project" value="InterPro"/>
</dbReference>
<dbReference type="GO" id="GO:0046872">
    <property type="term" value="F:metal ion binding"/>
    <property type="evidence" value="ECO:0007669"/>
    <property type="project" value="UniProtKB-KW"/>
</dbReference>
<dbReference type="GO" id="GO:0022900">
    <property type="term" value="P:electron transport chain"/>
    <property type="evidence" value="ECO:0007669"/>
    <property type="project" value="InterPro"/>
</dbReference>
<dbReference type="CDD" id="cd00207">
    <property type="entry name" value="fer2"/>
    <property type="match status" value="1"/>
</dbReference>
<dbReference type="FunFam" id="3.10.20.30:FF:000014">
    <property type="entry name" value="Ferredoxin"/>
    <property type="match status" value="1"/>
</dbReference>
<dbReference type="Gene3D" id="3.10.20.30">
    <property type="match status" value="1"/>
</dbReference>
<dbReference type="InterPro" id="IPR036010">
    <property type="entry name" value="2Fe-2S_ferredoxin-like_sf"/>
</dbReference>
<dbReference type="InterPro" id="IPR001041">
    <property type="entry name" value="2Fe-2S_ferredoxin-type"/>
</dbReference>
<dbReference type="InterPro" id="IPR006058">
    <property type="entry name" value="2Fe2S_fd_BS"/>
</dbReference>
<dbReference type="InterPro" id="IPR012675">
    <property type="entry name" value="Beta-grasp_dom_sf"/>
</dbReference>
<dbReference type="InterPro" id="IPR010241">
    <property type="entry name" value="Fd_pln"/>
</dbReference>
<dbReference type="NCBIfam" id="TIGR02008">
    <property type="entry name" value="fdx_plant"/>
    <property type="match status" value="1"/>
</dbReference>
<dbReference type="PANTHER" id="PTHR43112">
    <property type="entry name" value="FERREDOXIN"/>
    <property type="match status" value="1"/>
</dbReference>
<dbReference type="PANTHER" id="PTHR43112:SF3">
    <property type="entry name" value="FERREDOXIN-2, CHLOROPLASTIC"/>
    <property type="match status" value="1"/>
</dbReference>
<dbReference type="Pfam" id="PF00111">
    <property type="entry name" value="Fer2"/>
    <property type="match status" value="1"/>
</dbReference>
<dbReference type="SUPFAM" id="SSF54292">
    <property type="entry name" value="2Fe-2S ferredoxin-like"/>
    <property type="match status" value="1"/>
</dbReference>
<dbReference type="PROSITE" id="PS00197">
    <property type="entry name" value="2FE2S_FER_1"/>
    <property type="match status" value="1"/>
</dbReference>
<dbReference type="PROSITE" id="PS51085">
    <property type="entry name" value="2FE2S_FER_2"/>
    <property type="match status" value="1"/>
</dbReference>
<evidence type="ECO:0000250" key="1"/>
<evidence type="ECO:0000255" key="2">
    <source>
        <dbReference type="PROSITE-ProRule" id="PRU00465"/>
    </source>
</evidence>
<evidence type="ECO:0000269" key="3">
    <source ref="4"/>
</evidence>
<evidence type="ECO:0000305" key="4"/>
<name>FER1_TRIV2</name>
<reference key="1">
    <citation type="journal article" date="1986" name="Nucleic Acids Res.">
        <title>Coding sequence of a ferredoxin gene from Anabaena variabilis ATCC 29413.</title>
        <authorList>
            <person name="van der Plas J."/>
            <person name="Groot R.P."/>
            <person name="Weisbeek P.J."/>
            <person name="van Arkel G.A."/>
        </authorList>
    </citation>
    <scope>NUCLEOTIDE SEQUENCE [GENOMIC DNA]</scope>
</reference>
<reference key="2">
    <citation type="journal article" date="1988" name="Photosyn. Res.">
        <title>Genes encoding ferredoxins from Anabaena sp. PCC 7937 and Synechococcus sp. PCC 7942: structure and regulation.</title>
        <authorList>
            <person name="van der Plas J."/>
            <person name="de Groot R.P."/>
            <person name="Woortman M.R."/>
            <person name="Cremers F."/>
            <person name="Borrias M."/>
            <person name="van Arkel G.A."/>
            <person name="Weisbeek P.J."/>
        </authorList>
    </citation>
    <scope>NUCLEOTIDE SEQUENCE [GENOMIC DNA]</scope>
</reference>
<reference key="3">
    <citation type="journal article" date="2014" name="Stand. Genomic Sci.">
        <title>Complete genome sequence of Anabaena variabilis ATCC 29413.</title>
        <authorList>
            <person name="Thiel T."/>
            <person name="Pratte B.S."/>
            <person name="Zhong J."/>
            <person name="Goodwin L."/>
            <person name="Copeland A."/>
            <person name="Lucas S."/>
            <person name="Han C."/>
            <person name="Pitluck S."/>
            <person name="Land M.L."/>
            <person name="Kyrpides N.C."/>
            <person name="Woyke T."/>
        </authorList>
    </citation>
    <scope>NUCLEOTIDE SEQUENCE [LARGE SCALE GENOMIC DNA]</scope>
    <source>
        <strain>ATCC 29413 / PCC 7937</strain>
    </source>
</reference>
<reference key="4">
    <citation type="journal article" date="1983" name="Biochemistry">
        <title>Nuclear magnetic resonance studies of two-iron-two-sulfur ferredoxins. 2. Determination of the sequence of Anabaena variabilis ferredoxin II, assignment of aromatic resonances in proton spectra, and effects of chemical modification.</title>
        <authorList>
            <person name="Chan T.-M."/>
            <person name="Hermodson M.A."/>
            <person name="Ulrich E.L."/>
            <person name="Markley J.L."/>
        </authorList>
    </citation>
    <scope>PROTEIN SEQUENCE OF 2-99</scope>
</reference>
<feature type="initiator methionine" description="Removed" evidence="3">
    <location>
        <position position="1"/>
    </location>
</feature>
<feature type="chain" id="PRO_0000189302" description="Ferredoxin-1">
    <location>
        <begin position="2"/>
        <end position="99"/>
    </location>
</feature>
<feature type="domain" description="2Fe-2S ferredoxin-type" evidence="2">
    <location>
        <begin position="4"/>
        <end position="96"/>
    </location>
</feature>
<feature type="binding site" evidence="2">
    <location>
        <position position="42"/>
    </location>
    <ligand>
        <name>[2Fe-2S] cluster</name>
        <dbReference type="ChEBI" id="CHEBI:190135"/>
    </ligand>
</feature>
<feature type="binding site" evidence="2">
    <location>
        <position position="47"/>
    </location>
    <ligand>
        <name>[2Fe-2S] cluster</name>
        <dbReference type="ChEBI" id="CHEBI:190135"/>
    </ligand>
</feature>
<feature type="binding site" evidence="2">
    <location>
        <position position="50"/>
    </location>
    <ligand>
        <name>[2Fe-2S] cluster</name>
        <dbReference type="ChEBI" id="CHEBI:190135"/>
    </ligand>
</feature>
<feature type="binding site" evidence="2">
    <location>
        <position position="80"/>
    </location>
    <ligand>
        <name>[2Fe-2S] cluster</name>
        <dbReference type="ChEBI" id="CHEBI:190135"/>
    </ligand>
</feature>
<gene>
    <name type="primary">petF1</name>
    <name type="ordered locus">Ava_0756</name>
</gene>
<accession>P00254</accession>
<accession>Q3MF56</accession>